<feature type="chain" id="PRO_0000124797" description="Sterol 24-C-methyltransferase erg6">
    <location>
        <begin position="1"/>
        <end position="378"/>
    </location>
</feature>
<accession>O14321</accession>
<accession>P78782</accession>
<comment type="function">
    <text evidence="4 9 10">Sterol 24-C-methyltransferase; part of the third module of ergosterol biosynthesis pathway that includes by the late steps of the pathway (PubMed:18310029). Erg6 catalyzes the methyl transfer from S-adenosyl-methionine to the C-24 of zymosterol to form fecosterol (PubMed:18310029). The third module or late pathway involves the ergosterol synthesis itself through consecutive reactions that mainly occur in the endoplasmic reticulum (ER) membrane. Firstly, the squalene synthase erg9 catalyzes the condensation of 2 farnesyl pyrophosphate moieties to form squalene, which is the precursor of all steroids. Secondly, squalene is converted into lanosterol by the consecutive action of the squalene epoxidase erg1 and the lanosterol synthase erg7. The lanosterol 14-alpha-demethylase erg11/cyp1 catalyzes C14-demethylation of lanosterol to produce 4,4'-dimethyl cholesta-8,14,24-triene-3-beta-ol. In the next steps, a complex process involving various demethylation, reduction and desaturation reactions catalyzed by the C-14 reductase erg24 and the C-4 demethylation complex erg25-erg26-erg27 leads to the production of zymosterol. Erg28 likely functions in the C-4 demethylation complex reaction by tethering erg26 and Erg27 to the endoplasmic reticulum or to facilitate interaction between these proteins. Then, the sterol 24-C-methyltransferase erg6 catalyzes the methyl transfer from S-adenosyl-methionine to the C-24 of zymosterol to form fecosterol. The C-8 sterol isomerase erg2 catalyzes the reaction which results in unsaturation at C-7 in the B ring of sterols and thus converts fecosterol to episterol. The sterol-C5-desaturases erg31 and erg32 then catalyze the introduction of a C-5 double bond in the B ring to produce 5-dehydroepisterol. The C-22 sterol desaturase erg5 further converts 5-dehydroepisterol into ergosta-5,7,22,24(28)-tetraen-3beta-ol by forming the C-22(23) double bond in the sterol side chain. Finally, ergosta-5,7,22,24(28)-tetraen-3beta-ol is substrate of the C-24(28) sterol reductase erg4 to produce ergosterol (Probable) (PubMed:18310029). In the genus Schizosaccharomyces, a second route exists between lanosterol and fecosterol, via the methylation of lanosterol to eburicol by erg6, followed by C14-demethylation by erg11/cyp1 and C4-demethylation by the demethylation complex erg25-erg26-erg27 (Probable) (PubMed:8586261).</text>
</comment>
<comment type="catalytic activity">
    <reaction evidence="9">
        <text>zymosterol + S-adenosyl-L-methionine = fecosterol + S-adenosyl-L-homocysteine + H(+)</text>
        <dbReference type="Rhea" id="RHEA:21128"/>
        <dbReference type="ChEBI" id="CHEBI:15378"/>
        <dbReference type="ChEBI" id="CHEBI:17038"/>
        <dbReference type="ChEBI" id="CHEBI:18252"/>
        <dbReference type="ChEBI" id="CHEBI:57856"/>
        <dbReference type="ChEBI" id="CHEBI:59789"/>
        <dbReference type="EC" id="2.1.1.41"/>
    </reaction>
    <physiologicalReaction direction="left-to-right" evidence="9">
        <dbReference type="Rhea" id="RHEA:21129"/>
    </physiologicalReaction>
</comment>
<comment type="catalytic activity">
    <reaction evidence="10">
        <text>lanosterol + S-adenosyl-L-methionine = eburicol + S-adenosyl-L-homocysteine + H(+)</text>
        <dbReference type="Rhea" id="RHEA:52652"/>
        <dbReference type="ChEBI" id="CHEBI:15378"/>
        <dbReference type="ChEBI" id="CHEBI:16521"/>
        <dbReference type="ChEBI" id="CHEBI:57856"/>
        <dbReference type="ChEBI" id="CHEBI:59789"/>
        <dbReference type="ChEBI" id="CHEBI:70315"/>
    </reaction>
    <physiologicalReaction direction="left-to-right" evidence="10">
        <dbReference type="Rhea" id="RHEA:52653"/>
    </physiologicalReaction>
</comment>
<comment type="pathway">
    <text evidence="4">Steroid metabolism; ergosterol biosynthesis.</text>
</comment>
<comment type="subcellular location">
    <subcellularLocation>
        <location evidence="3">Nucleus</location>
    </subcellularLocation>
    <subcellularLocation>
        <location evidence="8">Endoplasmic reticulum</location>
    </subcellularLocation>
</comment>
<comment type="induction">
    <text evidence="2">Expression is anaerobically up-regulated via the sterol regulatory element binding protein sre1.</text>
</comment>
<comment type="disruption phenotype">
    <text evidence="4">Abolishes the production of ergosterol and leads to abnormal cellular morphology (PubMed:18310029). Leads to susceptibility to cycloheximide and to staurosporine, but does not affect tolerance to nystatin and to amphotericin B (PubMed:18310029).</text>
</comment>
<comment type="miscellaneous">
    <text evidence="5">In Aspergillus, the biosynthesis pathway of the sterol precursors leading to the prevalent sterol ergosterol differs from yeast. The ringsystem of lanosterol in S.cerevisiae is firstly demethylised in three enzymatic steps leading to the intermediate zymosterol and secondly a methyl group is added to zymosterol by the sterol 24-C-methyltransferase to form fecosterol. In Aspergillus, lanosterol is firstly transmethylated by the sterol 24-C-methyltransferase leading to the intermediate eburicol and secondly demethylated in three steps to form fecosterol. In the genus Schizosaccharomyces, 2 routes exist from lanosterol to erposterol: the classical one via zymosterol and the second one via the formation of eburicol followed by demethylation.</text>
</comment>
<comment type="similarity">
    <text evidence="1">Belongs to the class I-like SAM-binding methyltransferase superfamily. Erg6/SMT family.</text>
</comment>
<protein>
    <recommendedName>
        <fullName evidence="6">Sterol 24-C-methyltransferase erg6</fullName>
        <shortName evidence="7">SCMT</shortName>
        <shortName evidence="7">SMT</shortName>
        <ecNumber evidence="9">2.1.1.-</ecNumber>
        <ecNumber evidence="10">2.1.1.41</ecNumber>
    </recommendedName>
    <alternativeName>
        <fullName evidence="7">Delta(24)-sterol C-methyltransferase erg6</fullName>
    </alternativeName>
    <alternativeName>
        <fullName evidence="6">Ergosterol biosynthesis protein 6</fullName>
    </alternativeName>
</protein>
<proteinExistence type="evidence at transcript level"/>
<sequence>MSSTALLPPNTDQVLSRRLHGKAAEKKTGLAAIASKDVDEQSRKLQEYFEFWDRNHENESEEDRARRIDGYKSVVNSYYDLATDLYEYGWSQSFHFSRFYKGEAFAQSIARHEHYLAYRMGIKPGSRVLDVGCGVGGPAREITEFTGCNLVGLNNNDYQISRCNNYAVKRNLDKKQVFVKGDFMHMPFEDNTFDYVYAIEATVHAPSLEGVYGEIFRVLKPGGVFGVYEWVMSDDYDSSIPKHREIAYNIEVGDGIPQMVRKCDAVEAIKKVGFNLLEEDDLTDHDNPDLPWYYPLTGDITKCQNIWDVFTVFRTSRLGKLVTRYSVQFLEKIGVAAKGTSKVGDTLAIAQKGLIEGGETHLFTPMFLMIAKKPETDA</sequence>
<dbReference type="EC" id="2.1.1.-" evidence="9"/>
<dbReference type="EC" id="2.1.1.41" evidence="10"/>
<dbReference type="EMBL" id="CU329671">
    <property type="protein sequence ID" value="CAB16897.1"/>
    <property type="molecule type" value="Genomic_DNA"/>
</dbReference>
<dbReference type="EMBL" id="D89131">
    <property type="protein sequence ID" value="BAA13793.2"/>
    <property type="molecule type" value="mRNA"/>
</dbReference>
<dbReference type="PIR" id="T39579">
    <property type="entry name" value="T39579"/>
</dbReference>
<dbReference type="PIR" id="T42375">
    <property type="entry name" value="T42375"/>
</dbReference>
<dbReference type="RefSeq" id="NP_595787.1">
    <property type="nucleotide sequence ID" value="NM_001021688.2"/>
</dbReference>
<dbReference type="SMR" id="O14321"/>
<dbReference type="FunCoup" id="O14321">
    <property type="interactions" value="182"/>
</dbReference>
<dbReference type="STRING" id="284812.O14321"/>
<dbReference type="iPTMnet" id="O14321"/>
<dbReference type="PaxDb" id="4896-SPBC16E9.05.1"/>
<dbReference type="EnsemblFungi" id="SPBC16E9.05.1">
    <property type="protein sequence ID" value="SPBC16E9.05.1:pep"/>
    <property type="gene ID" value="SPBC16E9.05"/>
</dbReference>
<dbReference type="GeneID" id="2539602"/>
<dbReference type="KEGG" id="spo:2539602"/>
<dbReference type="PomBase" id="SPBC16E9.05">
    <property type="gene designation" value="erg6"/>
</dbReference>
<dbReference type="VEuPathDB" id="FungiDB:SPBC16E9.05"/>
<dbReference type="eggNOG" id="KOG1269">
    <property type="taxonomic scope" value="Eukaryota"/>
</dbReference>
<dbReference type="HOGENOM" id="CLU_039068_5_3_1"/>
<dbReference type="InParanoid" id="O14321"/>
<dbReference type="OMA" id="AFNKAMH"/>
<dbReference type="PhylomeDB" id="O14321"/>
<dbReference type="UniPathway" id="UPA00768"/>
<dbReference type="PRO" id="PR:O14321"/>
<dbReference type="Proteomes" id="UP000002485">
    <property type="component" value="Chromosome II"/>
</dbReference>
<dbReference type="GO" id="GO:0005783">
    <property type="term" value="C:endoplasmic reticulum"/>
    <property type="evidence" value="ECO:0000318"/>
    <property type="project" value="GO_Central"/>
</dbReference>
<dbReference type="GO" id="GO:0005634">
    <property type="term" value="C:nucleus"/>
    <property type="evidence" value="ECO:0007005"/>
    <property type="project" value="PomBase"/>
</dbReference>
<dbReference type="GO" id="GO:0003838">
    <property type="term" value="F:sterol 24-C-methyltransferase activity"/>
    <property type="evidence" value="ECO:0000318"/>
    <property type="project" value="GO_Central"/>
</dbReference>
<dbReference type="GO" id="GO:0006696">
    <property type="term" value="P:ergosterol biosynthetic process"/>
    <property type="evidence" value="ECO:0000315"/>
    <property type="project" value="PomBase"/>
</dbReference>
<dbReference type="GO" id="GO:0032259">
    <property type="term" value="P:methylation"/>
    <property type="evidence" value="ECO:0007669"/>
    <property type="project" value="UniProtKB-KW"/>
</dbReference>
<dbReference type="CDD" id="cd02440">
    <property type="entry name" value="AdoMet_MTases"/>
    <property type="match status" value="1"/>
</dbReference>
<dbReference type="FunFam" id="3.40.50.150:FF:000232">
    <property type="entry name" value="Sterol 24-C-methyltransferase erg6"/>
    <property type="match status" value="1"/>
</dbReference>
<dbReference type="Gene3D" id="3.40.50.150">
    <property type="entry name" value="Vaccinia Virus protein VP39"/>
    <property type="match status" value="1"/>
</dbReference>
<dbReference type="InterPro" id="IPR050447">
    <property type="entry name" value="Erg6_SMT_methyltransf"/>
</dbReference>
<dbReference type="InterPro" id="IPR013216">
    <property type="entry name" value="Methyltransf_11"/>
</dbReference>
<dbReference type="InterPro" id="IPR030384">
    <property type="entry name" value="MeTrfase_SMT"/>
</dbReference>
<dbReference type="InterPro" id="IPR029063">
    <property type="entry name" value="SAM-dependent_MTases_sf"/>
</dbReference>
<dbReference type="InterPro" id="IPR013705">
    <property type="entry name" value="Sterol_MeTrfase_C"/>
</dbReference>
<dbReference type="PANTHER" id="PTHR44068:SF1">
    <property type="entry name" value="HYPOTHETICAL LOC100005854"/>
    <property type="match status" value="1"/>
</dbReference>
<dbReference type="PANTHER" id="PTHR44068">
    <property type="entry name" value="ZGC:194242"/>
    <property type="match status" value="1"/>
</dbReference>
<dbReference type="Pfam" id="PF08241">
    <property type="entry name" value="Methyltransf_11"/>
    <property type="match status" value="1"/>
</dbReference>
<dbReference type="Pfam" id="PF08498">
    <property type="entry name" value="Sterol_MT_C"/>
    <property type="match status" value="1"/>
</dbReference>
<dbReference type="SUPFAM" id="SSF53335">
    <property type="entry name" value="S-adenosyl-L-methionine-dependent methyltransferases"/>
    <property type="match status" value="1"/>
</dbReference>
<dbReference type="PROSITE" id="PS51685">
    <property type="entry name" value="SAM_MT_ERG6_SMT"/>
    <property type="match status" value="1"/>
</dbReference>
<evidence type="ECO:0000255" key="1">
    <source>
        <dbReference type="PROSITE-ProRule" id="PRU01022"/>
    </source>
</evidence>
<evidence type="ECO:0000269" key="2">
    <source>
    </source>
</evidence>
<evidence type="ECO:0000269" key="3">
    <source>
    </source>
</evidence>
<evidence type="ECO:0000269" key="4">
    <source>
    </source>
</evidence>
<evidence type="ECO:0000269" key="5">
    <source>
    </source>
</evidence>
<evidence type="ECO:0000303" key="6">
    <source>
    </source>
</evidence>
<evidence type="ECO:0000305" key="7"/>
<evidence type="ECO:0000305" key="8">
    <source>
    </source>
</evidence>
<evidence type="ECO:0000305" key="9">
    <source>
    </source>
</evidence>
<evidence type="ECO:0000305" key="10">
    <source>
    </source>
</evidence>
<reference key="1">
    <citation type="journal article" date="2002" name="Nature">
        <title>The genome sequence of Schizosaccharomyces pombe.</title>
        <authorList>
            <person name="Wood V."/>
            <person name="Gwilliam R."/>
            <person name="Rajandream M.A."/>
            <person name="Lyne M.H."/>
            <person name="Lyne R."/>
            <person name="Stewart A."/>
            <person name="Sgouros J.G."/>
            <person name="Peat N."/>
            <person name="Hayles J."/>
            <person name="Baker S.G."/>
            <person name="Basham D."/>
            <person name="Bowman S."/>
            <person name="Brooks K."/>
            <person name="Brown D."/>
            <person name="Brown S."/>
            <person name="Chillingworth T."/>
            <person name="Churcher C.M."/>
            <person name="Collins M."/>
            <person name="Connor R."/>
            <person name="Cronin A."/>
            <person name="Davis P."/>
            <person name="Feltwell T."/>
            <person name="Fraser A."/>
            <person name="Gentles S."/>
            <person name="Goble A."/>
            <person name="Hamlin N."/>
            <person name="Harris D.E."/>
            <person name="Hidalgo J."/>
            <person name="Hodgson G."/>
            <person name="Holroyd S."/>
            <person name="Hornsby T."/>
            <person name="Howarth S."/>
            <person name="Huckle E.J."/>
            <person name="Hunt S."/>
            <person name="Jagels K."/>
            <person name="James K.D."/>
            <person name="Jones L."/>
            <person name="Jones M."/>
            <person name="Leather S."/>
            <person name="McDonald S."/>
            <person name="McLean J."/>
            <person name="Mooney P."/>
            <person name="Moule S."/>
            <person name="Mungall K.L."/>
            <person name="Murphy L.D."/>
            <person name="Niblett D."/>
            <person name="Odell C."/>
            <person name="Oliver K."/>
            <person name="O'Neil S."/>
            <person name="Pearson D."/>
            <person name="Quail M.A."/>
            <person name="Rabbinowitsch E."/>
            <person name="Rutherford K.M."/>
            <person name="Rutter S."/>
            <person name="Saunders D."/>
            <person name="Seeger K."/>
            <person name="Sharp S."/>
            <person name="Skelton J."/>
            <person name="Simmonds M.N."/>
            <person name="Squares R."/>
            <person name="Squares S."/>
            <person name="Stevens K."/>
            <person name="Taylor K."/>
            <person name="Taylor R.G."/>
            <person name="Tivey A."/>
            <person name="Walsh S.V."/>
            <person name="Warren T."/>
            <person name="Whitehead S."/>
            <person name="Woodward J.R."/>
            <person name="Volckaert G."/>
            <person name="Aert R."/>
            <person name="Robben J."/>
            <person name="Grymonprez B."/>
            <person name="Weltjens I."/>
            <person name="Vanstreels E."/>
            <person name="Rieger M."/>
            <person name="Schaefer M."/>
            <person name="Mueller-Auer S."/>
            <person name="Gabel C."/>
            <person name="Fuchs M."/>
            <person name="Duesterhoeft A."/>
            <person name="Fritzc C."/>
            <person name="Holzer E."/>
            <person name="Moestl D."/>
            <person name="Hilbert H."/>
            <person name="Borzym K."/>
            <person name="Langer I."/>
            <person name="Beck A."/>
            <person name="Lehrach H."/>
            <person name="Reinhardt R."/>
            <person name="Pohl T.M."/>
            <person name="Eger P."/>
            <person name="Zimmermann W."/>
            <person name="Wedler H."/>
            <person name="Wambutt R."/>
            <person name="Purnelle B."/>
            <person name="Goffeau A."/>
            <person name="Cadieu E."/>
            <person name="Dreano S."/>
            <person name="Gloux S."/>
            <person name="Lelaure V."/>
            <person name="Mottier S."/>
            <person name="Galibert F."/>
            <person name="Aves S.J."/>
            <person name="Xiang Z."/>
            <person name="Hunt C."/>
            <person name="Moore K."/>
            <person name="Hurst S.M."/>
            <person name="Lucas M."/>
            <person name="Rochet M."/>
            <person name="Gaillardin C."/>
            <person name="Tallada V.A."/>
            <person name="Garzon A."/>
            <person name="Thode G."/>
            <person name="Daga R.R."/>
            <person name="Cruzado L."/>
            <person name="Jimenez J."/>
            <person name="Sanchez M."/>
            <person name="del Rey F."/>
            <person name="Benito J."/>
            <person name="Dominguez A."/>
            <person name="Revuelta J.L."/>
            <person name="Moreno S."/>
            <person name="Armstrong J."/>
            <person name="Forsburg S.L."/>
            <person name="Cerutti L."/>
            <person name="Lowe T."/>
            <person name="McCombie W.R."/>
            <person name="Paulsen I."/>
            <person name="Potashkin J."/>
            <person name="Shpakovski G.V."/>
            <person name="Ussery D."/>
            <person name="Barrell B.G."/>
            <person name="Nurse P."/>
        </authorList>
    </citation>
    <scope>NUCLEOTIDE SEQUENCE [LARGE SCALE GENOMIC DNA]</scope>
    <source>
        <strain>972 / ATCC 24843</strain>
    </source>
</reference>
<reference key="2">
    <citation type="journal article" date="1997" name="DNA Res.">
        <title>Identification of open reading frames in Schizosaccharomyces pombe cDNAs.</title>
        <authorList>
            <person name="Yoshioka S."/>
            <person name="Kato K."/>
            <person name="Nakai K."/>
            <person name="Okayama H."/>
            <person name="Nojima H."/>
        </authorList>
    </citation>
    <scope>NUCLEOTIDE SEQUENCE [LARGE SCALE MRNA] OF 55-378</scope>
    <source>
        <strain>PR745</strain>
    </source>
</reference>
<reference key="3">
    <citation type="submission" date="2004-02" db="EMBL/GenBank/DDBJ databases">
        <authorList>
            <person name="Yoshioka S."/>
            <person name="Kato K."/>
            <person name="Nakai K."/>
            <person name="Okayama H."/>
            <person name="Nojima H."/>
        </authorList>
    </citation>
    <scope>SEQUENCE REVISION TO 55-63</scope>
</reference>
<reference key="4">
    <citation type="journal article" date="1995" name="FEMS Microbiol. Lett.">
        <title>Identification of 24-methylene-24,25-dihydrolanosterol as a precursor of ergosterol in the yeasts Schizosaccharomyces pombe and Schizosaccharomyces octosporus.</title>
        <authorList>
            <person name="Harmouch N."/>
            <person name="Coulon J."/>
            <person name="Bonaly R."/>
        </authorList>
    </citation>
    <scope>FUNCTION</scope>
</reference>
<reference key="5">
    <citation type="journal article" date="2006" name="Nat. Biotechnol.">
        <title>ORFeome cloning and global analysis of protein localization in the fission yeast Schizosaccharomyces pombe.</title>
        <authorList>
            <person name="Matsuyama A."/>
            <person name="Arai R."/>
            <person name="Yashiroda Y."/>
            <person name="Shirai A."/>
            <person name="Kamata A."/>
            <person name="Sekido S."/>
            <person name="Kobayashi Y."/>
            <person name="Hashimoto A."/>
            <person name="Hamamoto M."/>
            <person name="Hiraoka Y."/>
            <person name="Horinouchi S."/>
            <person name="Yoshida M."/>
        </authorList>
    </citation>
    <scope>SUBCELLULAR LOCATION [LARGE SCALE ANALYSIS]</scope>
</reference>
<reference key="6">
    <citation type="journal article" date="2006" name="Mol. Cell. Biol.">
        <title>Sterol regulatory element binding protein is a principal regulator of anaerobic gene expression in fission yeast.</title>
        <authorList>
            <person name="Todd B.L."/>
            <person name="Stewart E.V."/>
            <person name="Burg J.S."/>
            <person name="Hughes A.L."/>
            <person name="Espenshade P.J."/>
        </authorList>
    </citation>
    <scope>INDUCTION</scope>
</reference>
<reference key="7">
    <citation type="journal article" date="2008" name="Microbiology">
        <title>Multiple functions of ergosterol in the fission yeast Schizosaccharomyces pombe.</title>
        <authorList>
            <person name="Iwaki T."/>
            <person name="Iefuji H."/>
            <person name="Hiraga Y."/>
            <person name="Hosomi A."/>
            <person name="Morita T."/>
            <person name="Giga-Hama Y."/>
            <person name="Takegawa K."/>
        </authorList>
    </citation>
    <scope>FUNCTION</scope>
    <scope>DISRUPTION PHENOTYPE</scope>
    <scope>PATHWAY</scope>
</reference>
<organism>
    <name type="scientific">Schizosaccharomyces pombe (strain 972 / ATCC 24843)</name>
    <name type="common">Fission yeast</name>
    <dbReference type="NCBI Taxonomy" id="284812"/>
    <lineage>
        <taxon>Eukaryota</taxon>
        <taxon>Fungi</taxon>
        <taxon>Dikarya</taxon>
        <taxon>Ascomycota</taxon>
        <taxon>Taphrinomycotina</taxon>
        <taxon>Schizosaccharomycetes</taxon>
        <taxon>Schizosaccharomycetales</taxon>
        <taxon>Schizosaccharomycetaceae</taxon>
        <taxon>Schizosaccharomyces</taxon>
    </lineage>
</organism>
<keyword id="KW-0256">Endoplasmic reticulum</keyword>
<keyword id="KW-0444">Lipid biosynthesis</keyword>
<keyword id="KW-0443">Lipid metabolism</keyword>
<keyword id="KW-0489">Methyltransferase</keyword>
<keyword id="KW-0539">Nucleus</keyword>
<keyword id="KW-1185">Reference proteome</keyword>
<keyword id="KW-0949">S-adenosyl-L-methionine</keyword>
<keyword id="KW-0752">Steroid biosynthesis</keyword>
<keyword id="KW-0753">Steroid metabolism</keyword>
<keyword id="KW-0756">Sterol biosynthesis</keyword>
<keyword id="KW-1207">Sterol metabolism</keyword>
<keyword id="KW-0808">Transferase</keyword>
<gene>
    <name evidence="6" type="primary">erg6</name>
    <name type="ORF">SPBC16E9.05</name>
</gene>
<name>ERG6_SCHPO</name>